<proteinExistence type="evidence at protein level"/>
<reference key="1">
    <citation type="journal article" date="2005" name="Nature">
        <title>The map-based sequence of the rice genome.</title>
        <authorList>
            <consortium name="International rice genome sequencing project (IRGSP)"/>
        </authorList>
    </citation>
    <scope>NUCLEOTIDE SEQUENCE [LARGE SCALE GENOMIC DNA]</scope>
    <source>
        <strain>cv. Nipponbare</strain>
    </source>
</reference>
<reference key="2">
    <citation type="journal article" date="2008" name="Nucleic Acids Res.">
        <title>The rice annotation project database (RAP-DB): 2008 update.</title>
        <authorList>
            <consortium name="The rice annotation project (RAP)"/>
        </authorList>
    </citation>
    <scope>GENOME REANNOTATION</scope>
    <source>
        <strain>cv. Nipponbare</strain>
    </source>
</reference>
<reference key="3">
    <citation type="journal article" date="2013" name="Rice">
        <title>Improvement of the Oryza sativa Nipponbare reference genome using next generation sequence and optical map data.</title>
        <authorList>
            <person name="Kawahara Y."/>
            <person name="de la Bastide M."/>
            <person name="Hamilton J.P."/>
            <person name="Kanamori H."/>
            <person name="McCombie W.R."/>
            <person name="Ouyang S."/>
            <person name="Schwartz D.C."/>
            <person name="Tanaka T."/>
            <person name="Wu J."/>
            <person name="Zhou S."/>
            <person name="Childs K.L."/>
            <person name="Davidson R.M."/>
            <person name="Lin H."/>
            <person name="Quesada-Ocampo L."/>
            <person name="Vaillancourt B."/>
            <person name="Sakai H."/>
            <person name="Lee S.S."/>
            <person name="Kim J."/>
            <person name="Numa H."/>
            <person name="Itoh T."/>
            <person name="Buell C.R."/>
            <person name="Matsumoto T."/>
        </authorList>
    </citation>
    <scope>GENOME REANNOTATION</scope>
    <source>
        <strain>cv. Nipponbare</strain>
    </source>
</reference>
<reference key="4">
    <citation type="journal article" date="2003" name="Science">
        <title>Collection, mapping, and annotation of over 28,000 cDNA clones from japonica rice.</title>
        <authorList>
            <consortium name="The rice full-length cDNA consortium"/>
        </authorList>
    </citation>
    <scope>NUCLEOTIDE SEQUENCE [LARGE SCALE MRNA]</scope>
    <source>
        <strain>cv. Nipponbare</strain>
    </source>
</reference>
<reference key="5">
    <citation type="journal article" date="2008" name="Trends Plant Sci.">
        <title>Plant ABC proteins - a unified nomenclature and updated inventory.</title>
        <authorList>
            <person name="Verrier P.J."/>
            <person name="Bird D."/>
            <person name="Burla B."/>
            <person name="Dassa E."/>
            <person name="Forestier C."/>
            <person name="Geisler M."/>
            <person name="Klein M."/>
            <person name="Kolukisaoglu H.U."/>
            <person name="Lee Y."/>
            <person name="Martinoia E."/>
            <person name="Murphy A."/>
            <person name="Rea P.A."/>
            <person name="Samuels L."/>
            <person name="Schulz B."/>
            <person name="Spalding E.J."/>
            <person name="Yazaki K."/>
            <person name="Theodoulou F.L."/>
        </authorList>
    </citation>
    <scope>GENE FAMILY</scope>
    <scope>NOMENCLATURE</scope>
</reference>
<reference key="6">
    <citation type="journal article" date="2009" name="Plant Cell">
        <title>A bacterial-type ABC transporter is involved in aluminum tolerance in rice.</title>
        <authorList>
            <person name="Huang C.F."/>
            <person name="Yamaji N."/>
            <person name="Mitani N."/>
            <person name="Yano M."/>
            <person name="Nagamura Y."/>
            <person name="Ma J.F."/>
        </authorList>
    </citation>
    <scope>NUCLEOTIDE SEQUENCE [MRNA] OF 56-346</scope>
    <scope>FUNCTION</scope>
    <scope>INTERACTION WITH STAR2</scope>
    <scope>SUBCELLULAR LOCATION</scope>
    <scope>TISSUE SPECIFICITY</scope>
    <scope>INDUCTION BY ALUMINUM</scope>
    <scope>DISRUPTION PHENOTYPE</scope>
    <source>
        <strain>cv. Koshihikari</strain>
    </source>
</reference>
<reference key="7">
    <citation type="journal article" date="2009" name="Plant Cell">
        <title>A zinc finger transcription factor ART1 regulates multiple genes implicated in aluminum tolerance in rice.</title>
        <authorList>
            <person name="Yamaji N."/>
            <person name="Huang C.F."/>
            <person name="Nagao S."/>
            <person name="Yano M."/>
            <person name="Sato Y."/>
            <person name="Nagamura Y."/>
            <person name="Ma J.F."/>
        </authorList>
    </citation>
    <scope>INDUCTION BY ALUMINUM</scope>
</reference>
<comment type="function">
    <text evidence="3">Associates with STAR2 to form a functional transmembrane ABC transporter required for detoxification of aluminum (Al) in roots. Can specifically transport UDP-glucose.</text>
</comment>
<comment type="subunit">
    <text evidence="3">Interacts with STAR2.</text>
</comment>
<comment type="subcellular location">
    <subcellularLocation>
        <location evidence="3">Membrane</location>
    </subcellularLocation>
</comment>
<comment type="tissue specificity">
    <text evidence="3">Expressed in roots.</text>
</comment>
<comment type="induction">
    <text evidence="3 4">By Al in roots. Positively regulated by ART1.</text>
</comment>
<comment type="disruption phenotype">
    <text evidence="3">No visible phenotype under normal growth condition, but strong inhibition of root elongation when grown in the presence of Al or on acidic soil.</text>
</comment>
<comment type="similarity">
    <text evidence="7">Belongs to the ABC transporter superfamily. ABCI family.</text>
</comment>
<comment type="sequence caution" evidence="7">
    <conflict type="erroneous initiation">
        <sequence resource="EMBL-CDS" id="BAD53904"/>
    </conflict>
    <text>Truncated N-terminus.</text>
</comment>
<accession>Q0D9V6</accession>
<accession>A0A0P0X0N0</accession>
<accession>Q5Z8H2</accession>
<protein>
    <recommendedName>
        <fullName evidence="7">Protein STAR1</fullName>
    </recommendedName>
    <alternativeName>
        <fullName evidence="5">ABC transporter ABCI.12</fullName>
        <shortName evidence="5">OsABCI12</shortName>
    </alternativeName>
    <alternativeName>
        <fullName evidence="5">ABC transporter I family member 12</fullName>
    </alternativeName>
    <alternativeName>
        <fullName evidence="6">Protein ALUMINUM SENSITIVE 1</fullName>
    </alternativeName>
    <alternativeName>
        <fullName evidence="6">Protein SENSITIVE TO ALUMINUM RHIZOTOXICITY 1</fullName>
    </alternativeName>
</protein>
<organism>
    <name type="scientific">Oryza sativa subsp. japonica</name>
    <name type="common">Rice</name>
    <dbReference type="NCBI Taxonomy" id="39947"/>
    <lineage>
        <taxon>Eukaryota</taxon>
        <taxon>Viridiplantae</taxon>
        <taxon>Streptophyta</taxon>
        <taxon>Embryophyta</taxon>
        <taxon>Tracheophyta</taxon>
        <taxon>Spermatophyta</taxon>
        <taxon>Magnoliopsida</taxon>
        <taxon>Liliopsida</taxon>
        <taxon>Poales</taxon>
        <taxon>Poaceae</taxon>
        <taxon>BOP clade</taxon>
        <taxon>Oryzoideae</taxon>
        <taxon>Oryzeae</taxon>
        <taxon>Oryzinae</taxon>
        <taxon>Oryza</taxon>
        <taxon>Oryza sativa</taxon>
    </lineage>
</organism>
<feature type="chain" id="PRO_0000405576" description="Protein STAR1">
    <location>
        <begin position="1"/>
        <end position="346"/>
    </location>
</feature>
<feature type="domain" description="ABC transporter" evidence="1">
    <location>
        <begin position="112"/>
        <end position="344"/>
    </location>
</feature>
<feature type="region of interest" description="Disordered" evidence="2">
    <location>
        <begin position="23"/>
        <end position="48"/>
    </location>
</feature>
<feature type="binding site" evidence="1">
    <location>
        <begin position="146"/>
        <end position="153"/>
    </location>
    <ligand>
        <name>ATP</name>
        <dbReference type="ChEBI" id="CHEBI:30616"/>
    </ligand>
</feature>
<feature type="sequence conflict" description="In Ref. 4; AK109450." evidence="7" ref="4">
    <original>A</original>
    <variation>T</variation>
    <location>
        <position position="334"/>
    </location>
</feature>
<keyword id="KW-0067">ATP-binding</keyword>
<keyword id="KW-0472">Membrane</keyword>
<keyword id="KW-0547">Nucleotide-binding</keyword>
<keyword id="KW-1185">Reference proteome</keyword>
<keyword id="KW-0813">Transport</keyword>
<gene>
    <name evidence="6" type="primary">STAR1</name>
    <name evidence="5" type="synonym">ABCI12</name>
    <name evidence="6" type="synonym">ALS1</name>
    <name evidence="9" type="ordered locus">Os06g0695800</name>
    <name evidence="7" type="ordered locus">LOC_Os06g48060</name>
    <name evidence="8" type="ORF">P0622F03.26</name>
</gene>
<sequence>MRRLGLSLHHDTSPSFAALACNQRPPPNGTVHACSKSRPPQLEPGKVGKKPIKKTMRIARIPTSIPPHLRLPLDLSAVSPMGSASEHDVREHLLDVDGVGEEGAAAAAGPKIRVRGLTRRSEARGEEILRGVDLDVPRGVVVGVIGPSGSGKSTLLRALNRLWEPAPGAVLLDGVDICGIDVLALRRKVGMLFQLPAMFDGTVADNVRYGPQLQGKKLTDAEVQSLLSLADLDPALCSKPASELSVGQAQRVALARTLANDPEVLLLDEPTSALDPISTQNIEEAIVRLKKTRGLTTVMVSHSVKQIQRIADLVCLLVAGEVVEVLPPSELSEAKHPMARRFLELS</sequence>
<dbReference type="EMBL" id="AP003771">
    <property type="protein sequence ID" value="BAD53904.1"/>
    <property type="status" value="ALT_INIT"/>
    <property type="molecule type" value="Genomic_DNA"/>
</dbReference>
<dbReference type="EMBL" id="AP008212">
    <property type="protein sequence ID" value="BAF20367.1"/>
    <property type="molecule type" value="Genomic_DNA"/>
</dbReference>
<dbReference type="EMBL" id="AP014962">
    <property type="protein sequence ID" value="BAS99284.1"/>
    <property type="molecule type" value="Genomic_DNA"/>
</dbReference>
<dbReference type="EMBL" id="AK109450">
    <property type="status" value="NOT_ANNOTATED_CDS"/>
    <property type="molecule type" value="mRNA"/>
</dbReference>
<dbReference type="EMBL" id="AB253626">
    <property type="protein sequence ID" value="BAH28259.1"/>
    <property type="molecule type" value="mRNA"/>
</dbReference>
<dbReference type="RefSeq" id="XP_015641553.1">
    <property type="nucleotide sequence ID" value="XM_015786067.1"/>
</dbReference>
<dbReference type="SMR" id="Q0D9V6"/>
<dbReference type="FunCoup" id="Q0D9V6">
    <property type="interactions" value="24"/>
</dbReference>
<dbReference type="STRING" id="39947.Q0D9V6"/>
<dbReference type="TCDB" id="3.A.1.139.1">
    <property type="family name" value="the atp-binding cassette (abc) superfamily"/>
</dbReference>
<dbReference type="PaxDb" id="39947-Q0D9V6"/>
<dbReference type="EnsemblPlants" id="Os06t0695800-01">
    <property type="protein sequence ID" value="Os06t0695800-01"/>
    <property type="gene ID" value="Os06g0695800"/>
</dbReference>
<dbReference type="Gramene" id="Os06t0695800-01">
    <property type="protein sequence ID" value="Os06t0695800-01"/>
    <property type="gene ID" value="Os06g0695800"/>
</dbReference>
<dbReference type="KEGG" id="dosa:Os06g0695800"/>
<dbReference type="eggNOG" id="KOG0055">
    <property type="taxonomic scope" value="Eukaryota"/>
</dbReference>
<dbReference type="InParanoid" id="Q0D9V6"/>
<dbReference type="OMA" id="TMSIYEN"/>
<dbReference type="OrthoDB" id="6593433at2759"/>
<dbReference type="PlantReactome" id="R-OSA-9639136">
    <property type="pathway name" value="Response to Aluminum stress"/>
</dbReference>
<dbReference type="Proteomes" id="UP000000763">
    <property type="component" value="Chromosome 6"/>
</dbReference>
<dbReference type="Proteomes" id="UP000059680">
    <property type="component" value="Chromosome 6"/>
</dbReference>
<dbReference type="GO" id="GO:0012506">
    <property type="term" value="C:vesicle membrane"/>
    <property type="evidence" value="ECO:0000314"/>
    <property type="project" value="UniProtKB"/>
</dbReference>
<dbReference type="GO" id="GO:0005524">
    <property type="term" value="F:ATP binding"/>
    <property type="evidence" value="ECO:0007669"/>
    <property type="project" value="UniProtKB-KW"/>
</dbReference>
<dbReference type="GO" id="GO:0016887">
    <property type="term" value="F:ATP hydrolysis activity"/>
    <property type="evidence" value="ECO:0007669"/>
    <property type="project" value="InterPro"/>
</dbReference>
<dbReference type="GO" id="GO:0005315">
    <property type="term" value="F:phosphate transmembrane transporter activity"/>
    <property type="evidence" value="ECO:0007669"/>
    <property type="project" value="InterPro"/>
</dbReference>
<dbReference type="GO" id="GO:0005460">
    <property type="term" value="F:UDP-glucose transmembrane transporter activity"/>
    <property type="evidence" value="ECO:0000314"/>
    <property type="project" value="UniProtKB"/>
</dbReference>
<dbReference type="GO" id="GO:0035435">
    <property type="term" value="P:phosphate ion transmembrane transport"/>
    <property type="evidence" value="ECO:0007669"/>
    <property type="project" value="InterPro"/>
</dbReference>
<dbReference type="GO" id="GO:0010044">
    <property type="term" value="P:response to aluminum ion"/>
    <property type="evidence" value="ECO:0000315"/>
    <property type="project" value="UniProtKB"/>
</dbReference>
<dbReference type="GO" id="GO:0015786">
    <property type="term" value="P:UDP-glucose transmembrane transport"/>
    <property type="evidence" value="ECO:0000314"/>
    <property type="project" value="UniProtKB"/>
</dbReference>
<dbReference type="CDD" id="cd03260">
    <property type="entry name" value="ABC_PstB_phosphate_transporter"/>
    <property type="match status" value="1"/>
</dbReference>
<dbReference type="FunFam" id="3.40.50.300:FF:001209">
    <property type="entry name" value="ABC transporter, ATP-binding protein"/>
    <property type="match status" value="1"/>
</dbReference>
<dbReference type="Gene3D" id="3.40.50.300">
    <property type="entry name" value="P-loop containing nucleotide triphosphate hydrolases"/>
    <property type="match status" value="1"/>
</dbReference>
<dbReference type="InterPro" id="IPR003593">
    <property type="entry name" value="AAA+_ATPase"/>
</dbReference>
<dbReference type="InterPro" id="IPR003439">
    <property type="entry name" value="ABC_transporter-like_ATP-bd"/>
</dbReference>
<dbReference type="InterPro" id="IPR017871">
    <property type="entry name" value="ABC_transporter-like_CS"/>
</dbReference>
<dbReference type="InterPro" id="IPR027417">
    <property type="entry name" value="P-loop_NTPase"/>
</dbReference>
<dbReference type="InterPro" id="IPR005670">
    <property type="entry name" value="PstB-like"/>
</dbReference>
<dbReference type="PANTHER" id="PTHR43423">
    <property type="entry name" value="ABC TRANSPORTER I FAMILY MEMBER 17"/>
    <property type="match status" value="1"/>
</dbReference>
<dbReference type="PANTHER" id="PTHR43423:SF1">
    <property type="entry name" value="ABC TRANSPORTER I FAMILY MEMBER 17"/>
    <property type="match status" value="1"/>
</dbReference>
<dbReference type="Pfam" id="PF00005">
    <property type="entry name" value="ABC_tran"/>
    <property type="match status" value="1"/>
</dbReference>
<dbReference type="SMART" id="SM00382">
    <property type="entry name" value="AAA"/>
    <property type="match status" value="1"/>
</dbReference>
<dbReference type="SUPFAM" id="SSF52540">
    <property type="entry name" value="P-loop containing nucleoside triphosphate hydrolases"/>
    <property type="match status" value="1"/>
</dbReference>
<dbReference type="PROSITE" id="PS00211">
    <property type="entry name" value="ABC_TRANSPORTER_1"/>
    <property type="match status" value="1"/>
</dbReference>
<dbReference type="PROSITE" id="PS50893">
    <property type="entry name" value="ABC_TRANSPORTER_2"/>
    <property type="match status" value="1"/>
</dbReference>
<name>STAR1_ORYSJ</name>
<evidence type="ECO:0000255" key="1">
    <source>
        <dbReference type="PROSITE-ProRule" id="PRU00434"/>
    </source>
</evidence>
<evidence type="ECO:0000256" key="2">
    <source>
        <dbReference type="SAM" id="MobiDB-lite"/>
    </source>
</evidence>
<evidence type="ECO:0000269" key="3">
    <source>
    </source>
</evidence>
<evidence type="ECO:0000269" key="4">
    <source>
    </source>
</evidence>
<evidence type="ECO:0000303" key="5">
    <source>
    </source>
</evidence>
<evidence type="ECO:0000303" key="6">
    <source>
    </source>
</evidence>
<evidence type="ECO:0000305" key="7"/>
<evidence type="ECO:0000312" key="8">
    <source>
        <dbReference type="EMBL" id="BAD53904.1"/>
    </source>
</evidence>
<evidence type="ECO:0000312" key="9">
    <source>
        <dbReference type="EMBL" id="BAF20367.1"/>
    </source>
</evidence>